<keyword id="KW-0053">Apoptosis</keyword>
<keyword id="KW-1003">Cell membrane</keyword>
<keyword id="KW-0406">Ion transport</keyword>
<keyword id="KW-0472">Membrane</keyword>
<keyword id="KW-1185">Reference proteome</keyword>
<keyword id="KW-0915">Sodium</keyword>
<keyword id="KW-0739">Sodium transport</keyword>
<keyword id="KW-0762">Sugar transport</keyword>
<keyword id="KW-0769">Symport</keyword>
<keyword id="KW-0812">Transmembrane</keyword>
<keyword id="KW-1133">Transmembrane helix</keyword>
<keyword id="KW-0813">Transport</keyword>
<dbReference type="EMBL" id="EU152406">
    <property type="protein sequence ID" value="ABV71386.1"/>
    <property type="molecule type" value="mRNA"/>
</dbReference>
<dbReference type="RefSeq" id="NP_001103892.1">
    <property type="nucleotide sequence ID" value="NM_001110422.1"/>
</dbReference>
<dbReference type="SMR" id="A8I1B9"/>
<dbReference type="FunCoup" id="A8I1B9">
    <property type="interactions" value="33"/>
</dbReference>
<dbReference type="STRING" id="9823.ENSSSCP00000039880"/>
<dbReference type="GlyGen" id="A8I1B9">
    <property type="glycosylation" value="1 site"/>
</dbReference>
<dbReference type="GeneID" id="100126275"/>
<dbReference type="KEGG" id="ssc:100126275"/>
<dbReference type="CTD" id="115584"/>
<dbReference type="InParanoid" id="A8I1B9"/>
<dbReference type="OrthoDB" id="6132759at2759"/>
<dbReference type="Proteomes" id="UP000008227">
    <property type="component" value="Unplaced"/>
</dbReference>
<dbReference type="Proteomes" id="UP000314985">
    <property type="component" value="Unplaced"/>
</dbReference>
<dbReference type="Proteomes" id="UP000694570">
    <property type="component" value="Unplaced"/>
</dbReference>
<dbReference type="Proteomes" id="UP000694571">
    <property type="component" value="Unplaced"/>
</dbReference>
<dbReference type="Proteomes" id="UP000694720">
    <property type="component" value="Unplaced"/>
</dbReference>
<dbReference type="Proteomes" id="UP000694722">
    <property type="component" value="Unplaced"/>
</dbReference>
<dbReference type="Proteomes" id="UP000694723">
    <property type="component" value="Unplaced"/>
</dbReference>
<dbReference type="Proteomes" id="UP000694724">
    <property type="component" value="Unplaced"/>
</dbReference>
<dbReference type="Proteomes" id="UP000694725">
    <property type="component" value="Unplaced"/>
</dbReference>
<dbReference type="Proteomes" id="UP000694726">
    <property type="component" value="Unplaced"/>
</dbReference>
<dbReference type="Proteomes" id="UP000694727">
    <property type="component" value="Unplaced"/>
</dbReference>
<dbReference type="Proteomes" id="UP000694728">
    <property type="component" value="Unplaced"/>
</dbReference>
<dbReference type="GO" id="GO:0016324">
    <property type="term" value="C:apical plasma membrane"/>
    <property type="evidence" value="ECO:0007669"/>
    <property type="project" value="UniProtKB-SubCell"/>
</dbReference>
<dbReference type="GO" id="GO:0005886">
    <property type="term" value="C:plasma membrane"/>
    <property type="evidence" value="ECO:0000250"/>
    <property type="project" value="UniProtKB"/>
</dbReference>
<dbReference type="GO" id="GO:0005412">
    <property type="term" value="F:D-glucose:sodium symporter activity"/>
    <property type="evidence" value="ECO:0000318"/>
    <property type="project" value="GO_Central"/>
</dbReference>
<dbReference type="GO" id="GO:0005365">
    <property type="term" value="F:myo-inositol transmembrane transporter activity"/>
    <property type="evidence" value="ECO:0000250"/>
    <property type="project" value="UniProtKB"/>
</dbReference>
<dbReference type="GO" id="GO:0006915">
    <property type="term" value="P:apoptotic process"/>
    <property type="evidence" value="ECO:0007669"/>
    <property type="project" value="UniProtKB-KW"/>
</dbReference>
<dbReference type="GO" id="GO:0015798">
    <property type="term" value="P:myo-inositol transport"/>
    <property type="evidence" value="ECO:0000250"/>
    <property type="project" value="UniProtKB"/>
</dbReference>
<dbReference type="FunFam" id="1.20.1730.10:FF:000012">
    <property type="entry name" value="sodium/myo-inositol cotransporter 2 isoform X1"/>
    <property type="match status" value="1"/>
</dbReference>
<dbReference type="Gene3D" id="1.20.1730.10">
    <property type="entry name" value="Sodium/glucose cotransporter"/>
    <property type="match status" value="1"/>
</dbReference>
<dbReference type="InterPro" id="IPR038377">
    <property type="entry name" value="Na/Glc_symporter_sf"/>
</dbReference>
<dbReference type="InterPro" id="IPR001734">
    <property type="entry name" value="Na/solute_symporter"/>
</dbReference>
<dbReference type="NCBIfam" id="TIGR00813">
    <property type="entry name" value="sss"/>
    <property type="match status" value="1"/>
</dbReference>
<dbReference type="PANTHER" id="PTHR11819:SF171">
    <property type="entry name" value="SODIUM_MYO-INOSITOL COTRANSPORTER 2"/>
    <property type="match status" value="1"/>
</dbReference>
<dbReference type="PANTHER" id="PTHR11819">
    <property type="entry name" value="SOLUTE CARRIER FAMILY 5"/>
    <property type="match status" value="1"/>
</dbReference>
<dbReference type="Pfam" id="PF00474">
    <property type="entry name" value="SSF"/>
    <property type="match status" value="1"/>
</dbReference>
<dbReference type="PROSITE" id="PS50283">
    <property type="entry name" value="NA_SOLUT_SYMP_3"/>
    <property type="match status" value="1"/>
</dbReference>
<accession>A8I1B9</accession>
<evidence type="ECO:0000250" key="1">
    <source>
        <dbReference type="UniProtKB" id="Q28728"/>
    </source>
</evidence>
<evidence type="ECO:0000250" key="2">
    <source>
        <dbReference type="UniProtKB" id="Q8WWX8"/>
    </source>
</evidence>
<evidence type="ECO:0000250" key="3">
    <source>
        <dbReference type="UniProtKB" id="Q9Z1F2"/>
    </source>
</evidence>
<evidence type="ECO:0000255" key="4"/>
<evidence type="ECO:0000303" key="5">
    <source ref="1"/>
</evidence>
<evidence type="ECO:0000312" key="6">
    <source>
        <dbReference type="EMBL" id="ABV71386.1"/>
    </source>
</evidence>
<organism>
    <name type="scientific">Sus scrofa</name>
    <name type="common">Pig</name>
    <dbReference type="NCBI Taxonomy" id="9823"/>
    <lineage>
        <taxon>Eukaryota</taxon>
        <taxon>Metazoa</taxon>
        <taxon>Chordata</taxon>
        <taxon>Craniata</taxon>
        <taxon>Vertebrata</taxon>
        <taxon>Euteleostomi</taxon>
        <taxon>Mammalia</taxon>
        <taxon>Eutheria</taxon>
        <taxon>Laurasiatheria</taxon>
        <taxon>Artiodactyla</taxon>
        <taxon>Suina</taxon>
        <taxon>Suidae</taxon>
        <taxon>Sus</taxon>
    </lineage>
</organism>
<sequence length="674" mass="73881">MESSPSSPQPTQSDPLAVFPQRTLEPADIAVLVLYFLFVLAVGLWSTVKTRRDTVKGYFLAGGDMVWWPVGASLFASNVGSGHFVGLAGSGAAAGLSVTAYEFNGIFSVLMLAWIFLPIYIAGQVTTMPEYLRKRFGGSRIPITLAVLYLFIYIFTKISVDMYAGAIFIQQSLHLNLYLAIVGLLAITALYTIAGGLAAVIYTDALQTLIMLIGALTLMGYSFAAVGGMEGLKEKYFLALASNRSGNSSCGLPREDAFHIFRDPLTSDLPWPGILFGMSIPSLWYWCTDQVIVQRTLAAKNLSHAKGGSLMAAYLKVLPLFIMVFPGMVSRVLFPDQVACADPEICQKVCSNPAGCSDIAYPKLVLELLPMGLRGLMMAVMVAALMSSLTSIFNSASTIFTMDLWNHLRPRASERELMIVGRVFVLLLVLVSILWIPVVQASQGGQLFIYIQSISSYLQPPVAVVFIMGCFWKRTNEKGAFSGLILGLLLGLVRLVLDFIYPQPRCDQPDERPAVVRDVHYLYFSMILSSVTLVTVSTVSWCTAPPTQEMVSRLTWFTRHDPIVLKEQVPSATPVPVTVSQNGTPEASSTNIQFEIVQENTSKTHSCDMTKKQSKVVKTILWLCGMESKGKEEPPSRADPVIVSLEEIPLVKTLLDINLIVCISCAIFLWGYFA</sequence>
<feature type="chain" id="PRO_0000331572" description="Sodium/myo-inositol cotransporter 2">
    <location>
        <begin position="1"/>
        <end position="674"/>
    </location>
</feature>
<feature type="topological domain" description="Extracellular" evidence="4">
    <location>
        <begin position="1"/>
        <end position="27"/>
    </location>
</feature>
<feature type="transmembrane region" description="Helical" evidence="4">
    <location>
        <begin position="28"/>
        <end position="48"/>
    </location>
</feature>
<feature type="topological domain" description="Cytoplasmic" evidence="4">
    <location>
        <begin position="49"/>
        <end position="56"/>
    </location>
</feature>
<feature type="transmembrane region" description="Helical" evidence="4">
    <location>
        <begin position="57"/>
        <end position="77"/>
    </location>
</feature>
<feature type="topological domain" description="Extracellular" evidence="4">
    <location>
        <begin position="78"/>
        <end position="102"/>
    </location>
</feature>
<feature type="transmembrane region" description="Helical" evidence="4">
    <location>
        <begin position="103"/>
        <end position="123"/>
    </location>
</feature>
<feature type="topological domain" description="Cytoplasmic" evidence="4">
    <location>
        <begin position="124"/>
        <end position="140"/>
    </location>
</feature>
<feature type="transmembrane region" description="Helical" evidence="4">
    <location>
        <begin position="141"/>
        <end position="161"/>
    </location>
</feature>
<feature type="topological domain" description="Extracellular" evidence="4">
    <location>
        <begin position="162"/>
        <end position="180"/>
    </location>
</feature>
<feature type="transmembrane region" description="Helical" evidence="4">
    <location>
        <begin position="181"/>
        <end position="201"/>
    </location>
</feature>
<feature type="topological domain" description="Cytoplasmic" evidence="4">
    <location>
        <begin position="202"/>
        <end position="208"/>
    </location>
</feature>
<feature type="transmembrane region" description="Helical" evidence="4">
    <location>
        <begin position="209"/>
        <end position="229"/>
    </location>
</feature>
<feature type="topological domain" description="Extracellular" evidence="4">
    <location>
        <begin position="230"/>
        <end position="272"/>
    </location>
</feature>
<feature type="transmembrane region" description="Helical" evidence="4">
    <location>
        <begin position="273"/>
        <end position="293"/>
    </location>
</feature>
<feature type="topological domain" description="Cytoplasmic" evidence="4">
    <location>
        <begin position="294"/>
        <end position="308"/>
    </location>
</feature>
<feature type="transmembrane region" description="Helical" evidence="4">
    <location>
        <begin position="309"/>
        <end position="329"/>
    </location>
</feature>
<feature type="topological domain" description="Extracellular" evidence="4">
    <location>
        <begin position="330"/>
        <end position="374"/>
    </location>
</feature>
<feature type="transmembrane region" description="Helical" evidence="4">
    <location>
        <begin position="375"/>
        <end position="397"/>
    </location>
</feature>
<feature type="topological domain" description="Cytoplasmic" evidence="4">
    <location>
        <begin position="398"/>
        <end position="418"/>
    </location>
</feature>
<feature type="transmembrane region" description="Helical" evidence="4">
    <location>
        <begin position="419"/>
        <end position="439"/>
    </location>
</feature>
<feature type="topological domain" description="Extracellular" evidence="4">
    <location>
        <begin position="440"/>
        <end position="446"/>
    </location>
</feature>
<feature type="transmembrane region" description="Helical" evidence="4">
    <location>
        <begin position="447"/>
        <end position="467"/>
    </location>
</feature>
<feature type="topological domain" description="Cytoplasmic" evidence="4">
    <location>
        <begin position="468"/>
        <end position="479"/>
    </location>
</feature>
<feature type="transmembrane region" description="Helical" evidence="4">
    <location>
        <begin position="480"/>
        <end position="500"/>
    </location>
</feature>
<feature type="topological domain" description="Extracellular" evidence="4">
    <location>
        <begin position="501"/>
        <end position="518"/>
    </location>
</feature>
<feature type="transmembrane region" description="Helical" evidence="4">
    <location>
        <begin position="519"/>
        <end position="539"/>
    </location>
</feature>
<feature type="topological domain" description="Cytoplasmic" evidence="4">
    <location>
        <begin position="540"/>
        <end position="653"/>
    </location>
</feature>
<feature type="transmembrane region" description="Helical" evidence="4">
    <location>
        <begin position="654"/>
        <end position="674"/>
    </location>
</feature>
<gene>
    <name evidence="6" type="primary">SLC5A11</name>
    <name evidence="5" type="synonym">SMIT2</name>
</gene>
<comment type="function">
    <text evidence="1 2">Involved in the sodium-dependent cotransport of myo-inositol (MI) with a Na(+):MI stoichiometry of 2:1. Exclusively responsible for apical MI transport and absorption in intestine. Can also transport D-chiro-inositol (DCI) but not L-fucose (By similarity). Exhibits stereospecific cotransport of both D-glucose and D-xylose (By similarity). May induce apoptosis through the TNF-alpha, PDCD1 pathway (By similarity). May play a role in the regulation of MI concentration in serum, involving reabsorption in at least the proximal tubule of the kidney (By similarity).</text>
</comment>
<comment type="catalytic activity">
    <reaction evidence="2">
        <text>myo-inositol(out) + 2 Na(+)(out) = myo-inositol(in) + 2 Na(+)(in)</text>
        <dbReference type="Rhea" id="RHEA:72987"/>
        <dbReference type="ChEBI" id="CHEBI:17268"/>
        <dbReference type="ChEBI" id="CHEBI:29101"/>
    </reaction>
</comment>
<comment type="catalytic activity">
    <reaction evidence="2">
        <text>1D-chiro-inositol(out) + 2 Na(+)(out) = 1D-chiro-inositol(in) + 2 Na(+)(in)</text>
        <dbReference type="Rhea" id="RHEA:73315"/>
        <dbReference type="ChEBI" id="CHEBI:27372"/>
        <dbReference type="ChEBI" id="CHEBI:29101"/>
    </reaction>
</comment>
<comment type="catalytic activity">
    <reaction evidence="1">
        <text>D-glucose(out) + 2 Na(+)(out) = D-glucose(in) + 2 Na(+)(in)</text>
        <dbReference type="Rhea" id="RHEA:70495"/>
        <dbReference type="ChEBI" id="CHEBI:4167"/>
        <dbReference type="ChEBI" id="CHEBI:29101"/>
    </reaction>
</comment>
<comment type="catalytic activity">
    <reaction evidence="1">
        <text>D-xylose(out) + 2 Na(+)(out) = D-xylose(in) + 2 Na(+)(in)</text>
        <dbReference type="Rhea" id="RHEA:73367"/>
        <dbReference type="ChEBI" id="CHEBI:29101"/>
        <dbReference type="ChEBI" id="CHEBI:53455"/>
    </reaction>
</comment>
<comment type="activity regulation">
    <text evidence="2 3">MI transport activity inhibited by D-chiro-inositol (DCI), phlorizin (Pz) and sodium (Na(+)) (By similarity). Insulin increases D-chiro-inositol uptake (By similarity).</text>
</comment>
<comment type="subcellular location">
    <subcellularLocation>
        <location evidence="3">Membrane</location>
        <topology evidence="3">Multi-pass membrane protein</topology>
    </subcellularLocation>
    <subcellularLocation>
        <location evidence="3">Apical cell membrane</location>
        <topology evidence="3">Multi-pass membrane protein</topology>
    </subcellularLocation>
    <text evidence="1 3">Located on apical membrane of enterocytes (By similarity). Located on membrane of kidney brush border membrane vesicles (BBMVs) and apical membrane of proximal convoluted tubules (By similarity).</text>
</comment>
<comment type="similarity">
    <text evidence="4">Belongs to the sodium:solute symporter (SSF) (TC 2.A.21) family.</text>
</comment>
<reference evidence="6" key="1">
    <citation type="submission" date="2007-09" db="EMBL/GenBank/DDBJ databases">
        <title>The Na+/myo-inositol cotransporters SMIT1 and SMIT2 are not regulated by tonicity in the renal cell line LLC-PK1.</title>
        <authorList>
            <person name="Coady M.J."/>
            <person name="Bissonnette P."/>
            <person name="Wallendorff B."/>
            <person name="Lapointe J.-Y."/>
        </authorList>
    </citation>
    <scope>NUCLEOTIDE SEQUENCE [MRNA]</scope>
</reference>
<name>SC5AB_PIG</name>
<proteinExistence type="evidence at transcript level"/>
<protein>
    <recommendedName>
        <fullName>Sodium/myo-inositol cotransporter 2</fullName>
        <shortName>Na(+)/myo-inositol cotransporter 2</shortName>
    </recommendedName>
    <alternativeName>
        <fullName>Sodium/myo-inositol transporter 2</fullName>
        <shortName>SMIT2</shortName>
    </alternativeName>
    <alternativeName>
        <fullName>Solute carrier family 5 member 11</fullName>
    </alternativeName>
</protein>